<comment type="function">
    <text evidence="1 4 5 8 10 15">Non-canonical member of the structural maintenance of chromosomes (SMC) protein family that plays a key role in epigenetic silencing by regulating chromatin architecture (By similarity). Promotes heterochromatin formation in both autosomes and chromosome X, probably by mediating the merge of chromatin compartments (By similarity). Plays a key role in chromosome X inactivation in females by promoting the spreading of heterochromatin (PubMed:23542155). Recruited to inactivated chromosome X by Xist RNA and acts by mediating the merge of chromatin compartments: promotes random chromatin interactions that span the boundaries of existing structures, leading to create a compartment-less architecture typical of inactivated chromosome X (By similarity). Required to facilitate Xist RNA spreading (By similarity). Also required for silencing of a subset of clustered autosomal loci in somatic cells, such as the DUX4 locus (PubMed:23143600). Has ATPase activity; may participate in structural manipulation of chromatin in an ATP-dependent manner as part of its role in gene expression regulation (PubMed:29748383). Also plays a role in DNA repair: localizes to sites of DNA double-strand breaks in response to DNA damage to promote the repair of DNA double-strand breaks (PubMed:24790221, PubMed:25294876). Acts by promoting non-homologous end joining (NHEJ) and inhibiting homologous recombination (HR) repair (PubMed:25294876).</text>
</comment>
<comment type="catalytic activity">
    <reaction evidence="15">
        <text>ATP + H2O = ADP + phosphate + H(+)</text>
        <dbReference type="Rhea" id="RHEA:13065"/>
        <dbReference type="ChEBI" id="CHEBI:15377"/>
        <dbReference type="ChEBI" id="CHEBI:15378"/>
        <dbReference type="ChEBI" id="CHEBI:30616"/>
        <dbReference type="ChEBI" id="CHEBI:43474"/>
        <dbReference type="ChEBI" id="CHEBI:456216"/>
    </reaction>
</comment>
<comment type="subunit">
    <text evidence="1 5">Homodimer; homodimerizes via its SMC hinge domain (By similarity). Interacts with LRIF1 (PubMed:23542155).</text>
</comment>
<comment type="interaction">
    <interactant intactId="EBI-2801919">
        <id>A6NHR9</id>
    </interactant>
    <interactant intactId="EBI-473196">
        <id>Q5T3J3</id>
        <label>LRIF1</label>
    </interactant>
    <organismsDiffer>false</organismsDiffer>
    <experiments>9</experiments>
</comment>
<comment type="subcellular location">
    <subcellularLocation>
        <location evidence="8 10">Chromosome</location>
    </subcellularLocation>
    <text evidence="1 8 10">Recruited to inactivated chromosome X in females by Xist RNA (By similarity). Localizes at sites of DNA damage at double-strand breaks (DSBs) (PubMed:24790221, PubMed:25294876).</text>
</comment>
<comment type="alternative products">
    <event type="alternative splicing"/>
    <isoform>
        <id>A6NHR9-1</id>
        <name>1</name>
        <sequence type="displayed"/>
    </isoform>
    <isoform>
        <id>A6NHR9-2</id>
        <name>2</name>
        <sequence type="described" ref="VSP_033347 VSP_033348"/>
    </isoform>
    <isoform>
        <id>A6NHR9-3</id>
        <name>3</name>
        <sequence type="described" ref="VSP_033344 VSP_033345 VSP_033346"/>
    </isoform>
</comment>
<comment type="domain">
    <text evidence="1">Atypical member of the structural maintenance of chromosomes (SMC) protein family. Like other members of the SMC family, has ATPase activity, which is probably necessary for its engagement with chromatin, and a SMC hinge domain. However, the SMC hinge domain adopts an unconventional homodimeric arrangement augmented by an intermolecular coiled coil formed between the two monomers. This suggests that protein may assemble as a head-to-head parallel dimer without adopting a hairpin shape at the hinge domain, unlike the dimeric arrangement conventionally found in other members of the SMC protein family. The SMC hinge domain binds DNA and RNA.</text>
</comment>
<comment type="PTM">
    <text evidence="1">Sumoylated with SUMO1.</text>
</comment>
<comment type="disease" evidence="4 6 7 9 11 12 14 15">
    <disease id="DI-03604">
        <name>Facioscapulohumeral muscular dystrophy 2, digenic</name>
        <acronym>FSHD2</acronym>
        <description>A degenerative muscle disease characterized by slowly progressive weakness of the muscles of the face, upper-arm, and shoulder girdle. The onset of symptoms usually occurs in the first or second decade of life. Affected individuals usually present with impairment of upper extremity elevation. This tends to be followed by facial weakness, primarily involving the orbicularis oris and orbicularis oculi muscles.</description>
        <dbReference type="MIM" id="158901"/>
    </disease>
    <text evidence="4 6 11">The disease is caused by variants affecting the gene represented in this entry. SMCHD1 mutations lead to DUX4 expression in somatic tissues, including muscle cells, when an haplotype on chromosome 4 is permissive for DUX4 expression (PubMed:23143600). Ectopic expression of DUX4 in skeletal muscle activates the expression of stem cell and germline genes, and, when overexpressed in somatic cells, DUX4 can ultimately lead to cell death (PubMed:23143600). FSHD2 and FSHD1 share a common pathophysiological pathway in which the FSHD2 gene SMCHD1 can act as a modifier for disease severity in families affected by FSHD1 (PubMed:24075187, PubMed:25370034).</text>
</comment>
<comment type="disease" evidence="13 14 15">
    <disease id="DI-04955">
        <name>Bosma arhinia microphthalmia syndrome</name>
        <acronym>BAMS</acronym>
        <description>An autosomal dominant syndrome characterized by severe hypoplasia of the nose, palatal abnormalities, hypoplasia of the eyes, sensory abnormalities of taste and smell, hypogonadotropic hypogonadism with cryptorchidism, and normal intelligence.</description>
        <dbReference type="MIM" id="603457"/>
    </disease>
    <text>The disease is caused by variants affecting the gene represented in this entry.</text>
</comment>
<comment type="similarity">
    <text evidence="20">Belongs to the SMC family. Highly divergent.</text>
</comment>
<comment type="sequence caution" evidence="20">
    <conflict type="erroneous initiation">
        <sequence resource="EMBL-CDS" id="BAB15202"/>
    </conflict>
    <text>Truncated N-terminus.</text>
</comment>
<comment type="sequence caution" evidence="20">
    <conflict type="frameshift">
        <sequence resource="EMBL" id="BC035774"/>
    </conflict>
</comment>
<comment type="sequence caution" evidence="20">
    <conflict type="erroneous initiation">
        <sequence resource="EMBL-CDS" id="CAH10538"/>
    </conflict>
    <text>Truncated N-terminus.</text>
</comment>
<feature type="initiator methionine" description="Removed" evidence="16 22">
    <location>
        <position position="1"/>
    </location>
</feature>
<feature type="chain" id="PRO_0000332144" description="Structural maintenance of chromosomes flexible hinge domain-containing protein 1">
    <location>
        <begin position="2"/>
        <end position="2005"/>
    </location>
</feature>
<feature type="domain" description="SMC hinge" evidence="2">
    <location>
        <begin position="1720"/>
        <end position="1847"/>
    </location>
</feature>
<feature type="region of interest" description="Disordered" evidence="3">
    <location>
        <begin position="1"/>
        <end position="23"/>
    </location>
</feature>
<feature type="region of interest" description="ATPase activity domain" evidence="1">
    <location>
        <begin position="111"/>
        <end position="702"/>
    </location>
</feature>
<feature type="compositionally biased region" description="Gly residues" evidence="3">
    <location>
        <begin position="1"/>
        <end position="13"/>
    </location>
</feature>
<feature type="modified residue" description="N-acetylalanine" evidence="16 22">
    <location>
        <position position="2"/>
    </location>
</feature>
<feature type="modified residue" description="N6-acetyllysine" evidence="23">
    <location>
        <position position="1349"/>
    </location>
</feature>
<feature type="modified residue" description="Phosphothreonine" evidence="24">
    <location>
        <position position="1499"/>
    </location>
</feature>
<feature type="modified residue" description="N6-succinyllysine" evidence="1">
    <location>
        <position position="1802"/>
    </location>
</feature>
<feature type="modified residue" description="Phosphoserine" evidence="24">
    <location>
        <position position="1974"/>
    </location>
</feature>
<feature type="cross-link" description="Glycyl lysine isopeptide (Lys-Gly) (interchain with G-Cter in SUMO2)" evidence="25 26">
    <location>
        <position position="1374"/>
    </location>
</feature>
<feature type="cross-link" description="Glycyl lysine isopeptide (Lys-Gly) (interchain with G-Cter in SUMO2)" evidence="26">
    <location>
        <position position="1496"/>
    </location>
</feature>
<feature type="splice variant" id="VSP_033344" description="In isoform 3." evidence="17">
    <location>
        <begin position="1"/>
        <end position="1065"/>
    </location>
</feature>
<feature type="splice variant" id="VSP_033345" description="In isoform 3." evidence="17">
    <original>VF</original>
    <variation>GC</variation>
    <location>
        <begin position="1826"/>
        <end position="1827"/>
    </location>
</feature>
<feature type="splice variant" id="VSP_033346" description="In isoform 3." evidence="17">
    <location>
        <begin position="1828"/>
        <end position="2005"/>
    </location>
</feature>
<feature type="splice variant" id="VSP_033347" description="In isoform 2." evidence="18">
    <original>DLLQQYRSAVC</original>
    <variation>VHACVPSYSGG</variation>
    <location>
        <begin position="1907"/>
        <end position="1917"/>
    </location>
</feature>
<feature type="splice variant" id="VSP_033348" description="In isoform 2." evidence="18">
    <location>
        <begin position="1918"/>
        <end position="2005"/>
    </location>
</feature>
<feature type="sequence variant" id="VAR_078869" description="In BAMS; no change in protein abundance; dbSNP:rs1135402737." evidence="13">
    <original>L</original>
    <variation>P</variation>
    <location>
        <position position="107"/>
    </location>
</feature>
<feature type="sequence variant" id="VAR_080698" description="In FSHD2." evidence="11">
    <original>A</original>
    <variation>T</variation>
    <location>
        <position position="110"/>
    </location>
</feature>
<feature type="sequence variant" id="VAR_078870" description="In BAMS; no change in protein abundance; dbSNP:rs1135402738." evidence="13">
    <original>M</original>
    <variation>K</variation>
    <location>
        <position position="129"/>
    </location>
</feature>
<feature type="sequence variant" id="VAR_078871" description="In BAMS; has an increased ATPase activity." evidence="14">
    <original>A</original>
    <variation>S</variation>
    <location>
        <position position="134"/>
    </location>
</feature>
<feature type="sequence variant" id="VAR_078872" description="In BAMS; has an increased ATPase activity; no change in protein abundance; dbSNP:rs1057519645." evidence="13 14">
    <original>S</original>
    <variation>C</variation>
    <location>
        <position position="135"/>
    </location>
</feature>
<feature type="sequence variant" id="VAR_078873" description="In BAMS; no change in protein abundance; dbSNP:rs1057519646." evidence="13">
    <original>S</original>
    <variation>I</variation>
    <location>
        <position position="135"/>
    </location>
</feature>
<feature type="sequence variant" id="VAR_078874" description="In BAMS; no change in protein abundance; does not affect ATPase activity; dbSNP:rs1057519646." evidence="13 14 15">
    <original>S</original>
    <variation>N</variation>
    <location>
        <position position="135"/>
    </location>
</feature>
<feature type="sequence variant" id="VAR_078875" description="In BAMS; no change in protein abundance; dbSNP:rs1057519643." evidence="13">
    <original>E</original>
    <variation>D</variation>
    <location>
        <position position="136"/>
    </location>
</feature>
<feature type="sequence variant" id="VAR_078876" description="In BAMS; has an increased ATPase activity." evidence="14">
    <original>E</original>
    <variation>G</variation>
    <location>
        <position position="136"/>
    </location>
</feature>
<feature type="sequence variant" id="VAR_078877" description="In BAMS and FSHD2; no change in protein abundance; strongly increased ATPase activity; dbSNP:rs1057519644." evidence="9 13 15">
    <original>G</original>
    <variation>E</variation>
    <location>
        <position position="137"/>
    </location>
</feature>
<feature type="sequence variant" id="VAR_078878" description="In FSHD2." evidence="9">
    <location>
        <begin position="138"/>
        <end position="2005"/>
    </location>
</feature>
<feature type="sequence variant" id="VAR_078879" description="In BAMS; no change in protein abundance; dbSNP:rs1135402739." evidence="13">
    <original>N</original>
    <variation>H</variation>
    <location>
        <position position="139"/>
    </location>
</feature>
<feature type="sequence variant" id="VAR_078880" description="In BAMS; no change in protein abundance; dbSNP:rs1057519641." evidence="13">
    <original>L</original>
    <variation>F</variation>
    <location>
        <position position="141"/>
    </location>
</feature>
<feature type="sequence variant" id="VAR_078881" description="In BAMS; no change in protein abundance; dbSNP:rs1135402740." evidence="13">
    <original>F</original>
    <variation>V</variation>
    <location>
        <position position="171"/>
    </location>
</feature>
<feature type="sequence variant" id="VAR_078882" description="In FSHD2; decreased ATPase activity." evidence="9 15">
    <original>L</original>
    <variation>F</variation>
    <location>
        <position position="194"/>
    </location>
</feature>
<feature type="sequence variant" id="VAR_078883" description="In FSHD2." evidence="9">
    <location>
        <begin position="195"/>
        <end position="2005"/>
    </location>
</feature>
<feature type="sequence variant" id="VAR_078884" description="In BAMS; no change in protein abundance; dbSNP:rs1135402741." evidence="13">
    <original>A</original>
    <variation>G</variation>
    <location>
        <position position="242"/>
    </location>
</feature>
<feature type="sequence variant" id="VAR_078885" description="In FSHD2; decreased ATPase activity." evidence="9 15">
    <original>H</original>
    <variation>D</variation>
    <location>
        <position position="263"/>
    </location>
</feature>
<feature type="sequence variant" id="VAR_080699" description="In FSHD2; uncertain significance; dbSNP:rs746679988." evidence="7">
    <location>
        <position position="275"/>
    </location>
</feature>
<feature type="sequence variant" id="VAR_080700" description="In FSHD2; does not affect ATPase activity; dbSNP:rs886041921." evidence="15">
    <original>Y</original>
    <variation>C</variation>
    <location>
        <position position="283"/>
    </location>
</feature>
<feature type="sequence variant" id="VAR_078886" description="In BAMS; slightly decreased ATPase activity." evidence="14 15">
    <original>W</original>
    <variation>S</variation>
    <location>
        <position position="342"/>
    </location>
</feature>
<feature type="sequence variant" id="VAR_078887" description="In FSHD2." evidence="9">
    <location>
        <begin position="344"/>
        <end position="2005"/>
    </location>
</feature>
<feature type="sequence variant" id="VAR_078888" description="In BAMS; no change in protein abundance; dbSNP:rs1057519639." evidence="13">
    <original>Q</original>
    <variation>R</variation>
    <location>
        <position position="345"/>
    </location>
</feature>
<feature type="sequence variant" id="VAR_078889" description="In BAMS; no change in protein abundance; does not affect ATPase activity; dbSNP:rs1057519640." evidence="13 14 15">
    <original>H</original>
    <variation>R</variation>
    <location>
        <position position="348"/>
    </location>
</feature>
<feature type="sequence variant" id="VAR_069067" description="In FSHD2; decreased protein level in fibroblasts as compared to wild-type protein; abolished ATPase activity." evidence="4 9 14 15">
    <original>Y</original>
    <variation>C</variation>
    <location>
        <position position="353"/>
    </location>
</feature>
<feature type="sequence variant" id="VAR_078890" description="In BAMS; no change in protein abundance; dbSNP:rs1057519642." evidence="13">
    <original>Q</original>
    <variation>L</variation>
    <location>
        <position position="400"/>
    </location>
</feature>
<feature type="sequence variant" id="VAR_078891" description="In BAMS; no change in protein abundance; slightly decreased ATPase activity; dbSNP:rs1135402742." evidence="13 14 15">
    <original>D</original>
    <variation>V</variation>
    <location>
        <position position="420"/>
    </location>
</feature>
<feature type="sequence variant" id="VAR_078892" description="In FSHD2." evidence="9 12">
    <original>G</original>
    <variation>R</variation>
    <location>
        <position position="425"/>
    </location>
</feature>
<feature type="sequence variant" id="VAR_078893" description="In FSHD2." evidence="9">
    <location>
        <begin position="434"/>
        <end position="2005"/>
    </location>
</feature>
<feature type="sequence variant" id="VAR_078894" description="In BAMS; no change in protein abundance; slightly decreased ATPase activity; dbSNP:rs1135402743." evidence="13 15">
    <original>E</original>
    <variation>Q</variation>
    <location>
        <position position="473"/>
    </location>
</feature>
<feature type="sequence variant" id="VAR_080701" description="In FSHD2; abolished ATPase activity." evidence="11 15">
    <original>G</original>
    <variation>E</variation>
    <location>
        <position position="478"/>
    </location>
</feature>
<feature type="sequence variant" id="VAR_069068" description="In FSHD2; decreased protein level in fibroblasts as compared to wild-type protein." evidence="4 9">
    <original>R</original>
    <variation>P</variation>
    <location>
        <position position="479"/>
    </location>
</feature>
<feature type="sequence variant" id="VAR_069069" description="In FSHD2; decreased protein level in fibroblasts as compared to wild-type protein." evidence="4">
    <original>C</original>
    <variation>R</variation>
    <location>
        <position position="492"/>
    </location>
</feature>
<feature type="sequence variant" id="VAR_078895" description="In BAMS; increased ATPase activity." evidence="14 15">
    <original>K</original>
    <variation>E</variation>
    <location>
        <position position="518"/>
    </location>
</feature>
<feature type="sequence variant" id="VAR_078896" description="In BAMS; no change in protein abundance; slightly decreased ATPase activity; dbSNP:rs1135402744." evidence="13 15">
    <original>T</original>
    <variation>K</variation>
    <location>
        <position position="523"/>
    </location>
</feature>
<feature type="sequence variant" id="VAR_078897" description="In BAMS; no change in protein abundance; dbSNP:rs1135402745." evidence="13">
    <original>N</original>
    <variation>S</variation>
    <location>
        <position position="524"/>
    </location>
</feature>
<feature type="sequence variant" id="VAR_078898" description="In FSHD2; decreased ATPase activity; dbSNP:rs397518422." evidence="6 14 15">
    <original>T</original>
    <variation>M</variation>
    <location>
        <position position="527"/>
    </location>
</feature>
<feature type="sequence variant" id="VAR_078899" description="In BAMS; no change in protein abundance; does not affect ATPase activity; dbSNP:rs886042392." evidence="13 14 15">
    <original>R</original>
    <variation>Q</variation>
    <location>
        <position position="552"/>
    </location>
</feature>
<feature type="sequence variant" id="VAR_080702" description="In FSHD2." evidence="11">
    <original>V</original>
    <variation>D</variation>
    <location>
        <position position="615"/>
    </location>
</feature>
<feature type="sequence variant" id="VAR_069070" description="In FSHD2; decreased protein level in fibroblasts as compared to wild-type protein; decreased ATPase activity; dbSNP:rs397514623." evidence="4 9 15">
    <original>P</original>
    <variation>S</variation>
    <location>
        <position position="690"/>
    </location>
</feature>
<feature type="sequence variant" id="VAR_042959" description="In dbSNP:rs2276092.">
    <original>V</original>
    <variation>I</variation>
    <location>
        <position position="708"/>
    </location>
</feature>
<feature type="sequence variant" id="VAR_078900" description="In FSHD2." evidence="9">
    <original>G</original>
    <variation>S</variation>
    <location>
        <position position="716"/>
    </location>
</feature>
<feature type="sequence variant" id="VAR_078901" description="In FSHD2." evidence="9">
    <location>
        <begin position="731"/>
        <end position="2005"/>
    </location>
</feature>
<feature type="sequence variant" id="VAR_078902" description="In FSHD2." evidence="9">
    <original>L</original>
    <variation>P</variation>
    <location>
        <position position="748"/>
    </location>
</feature>
<feature type="sequence variant" id="VAR_078903" description="In FSHD2." evidence="9">
    <location>
        <begin position="780"/>
        <end position="2005"/>
    </location>
</feature>
<feature type="sequence variant" id="VAR_078904" description="In FSHD2." evidence="9">
    <original>D</original>
    <variation>N</variation>
    <location>
        <position position="849"/>
    </location>
</feature>
<feature type="sequence variant" id="VAR_069071" description="In FSHD2; decreased protein level in fibroblasts as compared to wild-type protein." evidence="4 9">
    <original>S</original>
    <variation>N</variation>
    <location>
        <position position="868"/>
    </location>
</feature>
<feature type="sequence variant" id="VAR_042960" description="In dbSNP:rs633422.">
    <original>K</original>
    <variation>N</variation>
    <location>
        <position position="879"/>
    </location>
</feature>
<feature type="sequence variant" id="VAR_051365" description="In dbSNP:rs9961682.">
    <original>I</original>
    <variation>V</variation>
    <location>
        <position position="960"/>
    </location>
</feature>
<feature type="sequence variant" id="VAR_078905" description="In FSHD2." evidence="9">
    <original>TD</original>
    <variation>MH</variation>
    <location>
        <begin position="1176"/>
        <end position="1177"/>
    </location>
</feature>
<feature type="sequence variant" id="VAR_080703" description="In FSHD2." evidence="11">
    <original>R</original>
    <variation>K</variation>
    <location>
        <position position="1449"/>
    </location>
</feature>
<feature type="sequence variant" id="VAR_080704" description="In FSHD2." evidence="11">
    <original>Q</original>
    <variation>P</variation>
    <location>
        <position position="1463"/>
    </location>
</feature>
<feature type="sequence variant" id="VAR_078906" description="In FSHD2." evidence="9">
    <original>M</original>
    <variation>I</variation>
    <location>
        <position position="1468"/>
    </location>
</feature>
<feature type="sequence variant" id="VAR_080705" description="In FSHD2." evidence="11">
    <original>P</original>
    <variation>L</variation>
    <location>
        <position position="1485"/>
    </location>
</feature>
<feature type="sequence variant" id="VAR_078907" description="In FSHD2." evidence="9">
    <original>QP</original>
    <variation>HQ</variation>
    <location>
        <begin position="1487"/>
        <end position="1488"/>
    </location>
</feature>
<feature type="sequence variant" id="VAR_069072" description="In FSHD2; decreased protein level in fibroblasts as compared to wild-type protein." evidence="4 9">
    <original>F</original>
    <variation>S</variation>
    <location>
        <position position="1554"/>
    </location>
</feature>
<feature type="sequence variant" id="VAR_080706" description="In FSHD2." evidence="11">
    <location>
        <begin position="1663"/>
        <end position="2005"/>
    </location>
</feature>
<feature type="sequence variant" id="VAR_078908" description="In FSHD2." evidence="9">
    <location>
        <begin position="1795"/>
        <end position="2005"/>
    </location>
</feature>
<feature type="sequence variant" id="VAR_078909" description="In FSHD2." evidence="9">
    <location>
        <begin position="1868"/>
        <end position="2005"/>
    </location>
</feature>
<feature type="sequence conflict" description="In Ref. 3; CAB45732." evidence="20" ref="3">
    <original>Q</original>
    <variation>E</variation>
    <location>
        <position position="1278"/>
    </location>
</feature>
<feature type="sequence conflict" description="In Ref. 3; CAH10538." evidence="20" ref="3">
    <original>G</original>
    <variation>E</variation>
    <location>
        <position position="1384"/>
    </location>
</feature>
<feature type="strand" evidence="27">
    <location>
        <begin position="26"/>
        <end position="32"/>
    </location>
</feature>
<feature type="strand" evidence="27">
    <location>
        <begin position="43"/>
        <end position="47"/>
    </location>
</feature>
<feature type="helix" evidence="27">
    <location>
        <begin position="53"/>
        <end position="64"/>
    </location>
</feature>
<feature type="strand" evidence="27">
    <location>
        <begin position="73"/>
        <end position="76"/>
    </location>
</feature>
<feature type="turn" evidence="27">
    <location>
        <begin position="84"/>
        <end position="86"/>
    </location>
</feature>
<feature type="helix" evidence="27">
    <location>
        <begin position="87"/>
        <end position="90"/>
    </location>
</feature>
<feature type="strand" evidence="27">
    <location>
        <begin position="96"/>
        <end position="102"/>
    </location>
</feature>
<feature type="strand" evidence="27">
    <location>
        <begin position="111"/>
        <end position="116"/>
    </location>
</feature>
<feature type="helix" evidence="27">
    <location>
        <begin position="122"/>
        <end position="125"/>
    </location>
</feature>
<feature type="turn" evidence="27">
    <location>
        <begin position="126"/>
        <end position="131"/>
    </location>
</feature>
<feature type="helix" evidence="27">
    <location>
        <begin position="141"/>
        <end position="155"/>
    </location>
</feature>
<feature type="turn" evidence="27">
    <location>
        <begin position="156"/>
        <end position="158"/>
    </location>
</feature>
<feature type="strand" evidence="27">
    <location>
        <begin position="163"/>
        <end position="171"/>
    </location>
</feature>
<feature type="helix" evidence="27">
    <location>
        <begin position="173"/>
        <end position="175"/>
    </location>
</feature>
<feature type="strand" evidence="27">
    <location>
        <begin position="179"/>
        <end position="184"/>
    </location>
</feature>
<feature type="helix" evidence="27">
    <location>
        <begin position="191"/>
        <end position="197"/>
    </location>
</feature>
<feature type="turn" evidence="27">
    <location>
        <begin position="204"/>
        <end position="206"/>
    </location>
</feature>
<feature type="helix" evidence="27">
    <location>
        <begin position="225"/>
        <end position="227"/>
    </location>
</feature>
<feature type="helix" evidence="27">
    <location>
        <begin position="238"/>
        <end position="246"/>
    </location>
</feature>
<feature type="strand" evidence="27">
    <location>
        <begin position="248"/>
        <end position="255"/>
    </location>
</feature>
<feature type="strand" evidence="27">
    <location>
        <begin position="260"/>
        <end position="268"/>
    </location>
</feature>
<feature type="helix" evidence="27">
    <location>
        <begin position="269"/>
        <end position="277"/>
    </location>
</feature>
<feature type="strand" evidence="27">
    <location>
        <begin position="284"/>
        <end position="290"/>
    </location>
</feature>
<feature type="helix" evidence="27">
    <location>
        <begin position="301"/>
        <end position="304"/>
    </location>
</feature>
<feature type="helix" evidence="27">
    <location>
        <begin position="305"/>
        <end position="311"/>
    </location>
</feature>
<feature type="helix" evidence="27">
    <location>
        <begin position="312"/>
        <end position="315"/>
    </location>
</feature>
<feature type="strand" evidence="27">
    <location>
        <begin position="317"/>
        <end position="326"/>
    </location>
</feature>
<feature type="helix" evidence="27">
    <location>
        <begin position="329"/>
        <end position="337"/>
    </location>
</feature>
<feature type="helix" evidence="27">
    <location>
        <begin position="339"/>
        <end position="349"/>
    </location>
</feature>
<feature type="helix" evidence="27">
    <location>
        <begin position="351"/>
        <end position="355"/>
    </location>
</feature>
<feature type="strand" evidence="27">
    <location>
        <begin position="374"/>
        <end position="382"/>
    </location>
</feature>
<feature type="strand" evidence="27">
    <location>
        <begin position="388"/>
        <end position="391"/>
    </location>
</feature>
<feature type="helix" evidence="27">
    <location>
        <begin position="392"/>
        <end position="394"/>
    </location>
</feature>
<feature type="helix" evidence="27">
    <location>
        <begin position="399"/>
        <end position="405"/>
    </location>
</feature>
<feature type="strand" evidence="27">
    <location>
        <begin position="408"/>
        <end position="416"/>
    </location>
</feature>
<feature type="strand" evidence="27">
    <location>
        <begin position="422"/>
        <end position="429"/>
    </location>
</feature>
<feature type="strand" evidence="27">
    <location>
        <begin position="471"/>
        <end position="476"/>
    </location>
</feature>
<feature type="strand" evidence="27">
    <location>
        <begin position="479"/>
        <end position="486"/>
    </location>
</feature>
<feature type="helix" evidence="27">
    <location>
        <begin position="490"/>
        <end position="492"/>
    </location>
</feature>
<feature type="helix" evidence="27">
    <location>
        <begin position="503"/>
        <end position="507"/>
    </location>
</feature>
<feature type="strand" evidence="27">
    <location>
        <begin position="508"/>
        <end position="515"/>
    </location>
</feature>
<feature type="strand" evidence="27">
    <location>
        <begin position="525"/>
        <end position="530"/>
    </location>
</feature>
<feature type="helix" evidence="27">
    <location>
        <begin position="531"/>
        <end position="535"/>
    </location>
</feature>
<feature type="strand" evidence="27">
    <location>
        <begin position="541"/>
        <end position="546"/>
    </location>
</feature>
<feature type="strand" evidence="27">
    <location>
        <begin position="549"/>
        <end position="552"/>
    </location>
</feature>
<feature type="helix" evidence="27">
    <location>
        <begin position="555"/>
        <end position="570"/>
    </location>
</feature>
<name>SMHD1_HUMAN</name>
<dbReference type="EC" id="3.6.1.-" evidence="15"/>
<dbReference type="EMBL" id="AK025646">
    <property type="protein sequence ID" value="BAB15202.1"/>
    <property type="status" value="ALT_INIT"/>
    <property type="molecule type" value="mRNA"/>
</dbReference>
<dbReference type="EMBL" id="AK126324">
    <property type="protein sequence ID" value="BAC86525.1"/>
    <property type="molecule type" value="mRNA"/>
</dbReference>
<dbReference type="EMBL" id="AP001011">
    <property type="status" value="NOT_ANNOTATED_CDS"/>
    <property type="molecule type" value="Genomic_DNA"/>
</dbReference>
<dbReference type="EMBL" id="AP005061">
    <property type="status" value="NOT_ANNOTATED_CDS"/>
    <property type="molecule type" value="Genomic_DNA"/>
</dbReference>
<dbReference type="EMBL" id="AL080138">
    <property type="protein sequence ID" value="CAB45732.1"/>
    <property type="molecule type" value="mRNA"/>
</dbReference>
<dbReference type="EMBL" id="CR627458">
    <property type="protein sequence ID" value="CAH10538.1"/>
    <property type="status" value="ALT_INIT"/>
    <property type="molecule type" value="mRNA"/>
</dbReference>
<dbReference type="EMBL" id="AB014550">
    <property type="protein sequence ID" value="BAA31625.1"/>
    <property type="molecule type" value="mRNA"/>
</dbReference>
<dbReference type="EMBL" id="BC035774">
    <property type="status" value="NOT_ANNOTATED_CDS"/>
    <property type="molecule type" value="mRNA"/>
</dbReference>
<dbReference type="CCDS" id="CCDS45822.1">
    <molecule id="A6NHR9-1"/>
</dbReference>
<dbReference type="PIR" id="T00372">
    <property type="entry name" value="T00372"/>
</dbReference>
<dbReference type="RefSeq" id="NP_056110.2">
    <molecule id="A6NHR9-1"/>
    <property type="nucleotide sequence ID" value="NM_015295.2"/>
</dbReference>
<dbReference type="PDB" id="6MW7">
    <property type="method" value="X-ray"/>
    <property type="resolution" value="2.19 A"/>
    <property type="chains" value="A/B/C/D=24-580"/>
</dbReference>
<dbReference type="PDBsum" id="6MW7"/>
<dbReference type="SMR" id="A6NHR9"/>
<dbReference type="BioGRID" id="116929">
    <property type="interactions" value="199"/>
</dbReference>
<dbReference type="FunCoup" id="A6NHR9">
    <property type="interactions" value="2034"/>
</dbReference>
<dbReference type="IntAct" id="A6NHR9">
    <property type="interactions" value="108"/>
</dbReference>
<dbReference type="MINT" id="A6NHR9"/>
<dbReference type="STRING" id="9606.ENSP00000326603"/>
<dbReference type="GlyGen" id="A6NHR9">
    <property type="glycosylation" value="1 site, 1 O-linked glycan (1 site)"/>
</dbReference>
<dbReference type="iPTMnet" id="A6NHR9"/>
<dbReference type="PhosphoSitePlus" id="A6NHR9"/>
<dbReference type="SwissPalm" id="A6NHR9"/>
<dbReference type="BioMuta" id="SMCHD1"/>
<dbReference type="jPOST" id="A6NHR9"/>
<dbReference type="MassIVE" id="A6NHR9"/>
<dbReference type="PaxDb" id="9606-ENSP00000326603"/>
<dbReference type="PeptideAtlas" id="A6NHR9"/>
<dbReference type="ProteomicsDB" id="1220">
    <molecule id="A6NHR9-1"/>
</dbReference>
<dbReference type="ProteomicsDB" id="1221">
    <molecule id="A6NHR9-2"/>
</dbReference>
<dbReference type="ProteomicsDB" id="1222">
    <molecule id="A6NHR9-3"/>
</dbReference>
<dbReference type="Pumba" id="A6NHR9"/>
<dbReference type="Antibodypedia" id="49899">
    <property type="antibodies" value="82 antibodies from 21 providers"/>
</dbReference>
<dbReference type="DNASU" id="23347"/>
<dbReference type="Ensembl" id="ENST00000320876.11">
    <molecule id="A6NHR9-1"/>
    <property type="protein sequence ID" value="ENSP00000326603.7"/>
    <property type="gene ID" value="ENSG00000101596.17"/>
</dbReference>
<dbReference type="GeneID" id="23347"/>
<dbReference type="KEGG" id="hsa:23347"/>
<dbReference type="MANE-Select" id="ENST00000320876.11">
    <property type="protein sequence ID" value="ENSP00000326603.7"/>
    <property type="RefSeq nucleotide sequence ID" value="NM_015295.3"/>
    <property type="RefSeq protein sequence ID" value="NP_056110.2"/>
</dbReference>
<dbReference type="UCSC" id="uc002klm.5">
    <molecule id="A6NHR9-1"/>
    <property type="organism name" value="human"/>
</dbReference>
<dbReference type="AGR" id="HGNC:29090"/>
<dbReference type="CTD" id="23347"/>
<dbReference type="DisGeNET" id="23347"/>
<dbReference type="GeneCards" id="SMCHD1"/>
<dbReference type="GeneReviews" id="SMCHD1"/>
<dbReference type="HGNC" id="HGNC:29090">
    <property type="gene designation" value="SMCHD1"/>
</dbReference>
<dbReference type="HPA" id="ENSG00000101596">
    <property type="expression patterns" value="Low tissue specificity"/>
</dbReference>
<dbReference type="MalaCards" id="SMCHD1"/>
<dbReference type="MIM" id="158901">
    <property type="type" value="phenotype"/>
</dbReference>
<dbReference type="MIM" id="603457">
    <property type="type" value="phenotype"/>
</dbReference>
<dbReference type="MIM" id="614982">
    <property type="type" value="gene"/>
</dbReference>
<dbReference type="neXtProt" id="NX_A6NHR9"/>
<dbReference type="OpenTargets" id="ENSG00000101596"/>
<dbReference type="Orphanet" id="269">
    <property type="disease" value="Facioscapulohumeral dystrophy"/>
</dbReference>
<dbReference type="Orphanet" id="2250">
    <property type="disease" value="Hyposmia-nasal and ocular hypoplasia-hypogonadotropic hypogonadism syndrome"/>
</dbReference>
<dbReference type="PharmGKB" id="PA128395776"/>
<dbReference type="VEuPathDB" id="HostDB:ENSG00000101596"/>
<dbReference type="eggNOG" id="ENOG502QREW">
    <property type="taxonomic scope" value="Eukaryota"/>
</dbReference>
<dbReference type="GeneTree" id="ENSGT00390000006950"/>
<dbReference type="HOGENOM" id="CLU_002288_1_0_1"/>
<dbReference type="InParanoid" id="A6NHR9"/>
<dbReference type="OMA" id="PIECFNR"/>
<dbReference type="OrthoDB" id="10036779at2759"/>
<dbReference type="PAN-GO" id="A6NHR9">
    <property type="GO annotations" value="1 GO annotation based on evolutionary models"/>
</dbReference>
<dbReference type="PhylomeDB" id="A6NHR9"/>
<dbReference type="TreeFam" id="TF329426"/>
<dbReference type="PathwayCommons" id="A6NHR9"/>
<dbReference type="SignaLink" id="A6NHR9"/>
<dbReference type="BioGRID-ORCS" id="23347">
    <property type="hits" value="61 hits in 1161 CRISPR screens"/>
</dbReference>
<dbReference type="CD-CODE" id="91857CE7">
    <property type="entry name" value="Nucleolus"/>
</dbReference>
<dbReference type="ChiTaRS" id="SMCHD1">
    <property type="organism name" value="human"/>
</dbReference>
<dbReference type="GenomeRNAi" id="23347"/>
<dbReference type="Pharos" id="A6NHR9">
    <property type="development level" value="Tbio"/>
</dbReference>
<dbReference type="PRO" id="PR:A6NHR9"/>
<dbReference type="Proteomes" id="UP000005640">
    <property type="component" value="Chromosome 18"/>
</dbReference>
<dbReference type="RNAct" id="A6NHR9">
    <property type="molecule type" value="protein"/>
</dbReference>
<dbReference type="Bgee" id="ENSG00000101596">
    <property type="expression patterns" value="Expressed in calcaneal tendon and 202 other cell types or tissues"/>
</dbReference>
<dbReference type="ExpressionAtlas" id="A6NHR9">
    <property type="expression patterns" value="baseline and differential"/>
</dbReference>
<dbReference type="GO" id="GO:0001740">
    <property type="term" value="C:Barr body"/>
    <property type="evidence" value="ECO:0000314"/>
    <property type="project" value="UniProtKB"/>
</dbReference>
<dbReference type="GO" id="GO:0016604">
    <property type="term" value="C:nuclear body"/>
    <property type="evidence" value="ECO:0000314"/>
    <property type="project" value="HPA"/>
</dbReference>
<dbReference type="GO" id="GO:0005654">
    <property type="term" value="C:nucleoplasm"/>
    <property type="evidence" value="ECO:0000314"/>
    <property type="project" value="HPA"/>
</dbReference>
<dbReference type="GO" id="GO:0035861">
    <property type="term" value="C:site of double-strand break"/>
    <property type="evidence" value="ECO:0000314"/>
    <property type="project" value="UniProtKB"/>
</dbReference>
<dbReference type="GO" id="GO:0005524">
    <property type="term" value="F:ATP binding"/>
    <property type="evidence" value="ECO:0007669"/>
    <property type="project" value="InterPro"/>
</dbReference>
<dbReference type="GO" id="GO:0016887">
    <property type="term" value="F:ATP hydrolysis activity"/>
    <property type="evidence" value="ECO:0000250"/>
    <property type="project" value="UniProtKB"/>
</dbReference>
<dbReference type="GO" id="GO:0003677">
    <property type="term" value="F:DNA binding"/>
    <property type="evidence" value="ECO:0007669"/>
    <property type="project" value="UniProtKB-KW"/>
</dbReference>
<dbReference type="GO" id="GO:0042803">
    <property type="term" value="F:protein homodimerization activity"/>
    <property type="evidence" value="ECO:0000250"/>
    <property type="project" value="UniProtKB"/>
</dbReference>
<dbReference type="GO" id="GO:0051276">
    <property type="term" value="P:chromosome organization"/>
    <property type="evidence" value="ECO:0007669"/>
    <property type="project" value="InterPro"/>
</dbReference>
<dbReference type="GO" id="GO:0009048">
    <property type="term" value="P:dosage compensation by inactivation of X chromosome"/>
    <property type="evidence" value="ECO:0000314"/>
    <property type="project" value="UniProtKB"/>
</dbReference>
<dbReference type="GO" id="GO:0006302">
    <property type="term" value="P:double-strand break repair"/>
    <property type="evidence" value="ECO:0007669"/>
    <property type="project" value="InterPro"/>
</dbReference>
<dbReference type="GO" id="GO:2000042">
    <property type="term" value="P:negative regulation of double-strand break repair via homologous recombination"/>
    <property type="evidence" value="ECO:0000315"/>
    <property type="project" value="UniProtKB"/>
</dbReference>
<dbReference type="GO" id="GO:0043584">
    <property type="term" value="P:nose development"/>
    <property type="evidence" value="ECO:0000315"/>
    <property type="project" value="UniProtKB"/>
</dbReference>
<dbReference type="GO" id="GO:0045739">
    <property type="term" value="P:positive regulation of DNA repair"/>
    <property type="evidence" value="ECO:0000315"/>
    <property type="project" value="UniProtKB"/>
</dbReference>
<dbReference type="GO" id="GO:2001034">
    <property type="term" value="P:positive regulation of double-strand break repair via nonhomologous end joining"/>
    <property type="evidence" value="ECO:0000315"/>
    <property type="project" value="UniProtKB"/>
</dbReference>
<dbReference type="CDD" id="cd16937">
    <property type="entry name" value="HATPase_SMCHD1-like"/>
    <property type="match status" value="1"/>
</dbReference>
<dbReference type="FunFam" id="3.30.565.10:FF:000060">
    <property type="entry name" value="Structural maintenance of chromosomes flexible hinge domain containing 1"/>
    <property type="match status" value="1"/>
</dbReference>
<dbReference type="FunFam" id="3.30.70.1620:FF:000004">
    <property type="entry name" value="Structural maintenance of chromosomes flexible hinge domain containing 1"/>
    <property type="match status" value="1"/>
</dbReference>
<dbReference type="Gene3D" id="3.30.565.10">
    <property type="entry name" value="Histidine kinase-like ATPase, C-terminal domain"/>
    <property type="match status" value="1"/>
</dbReference>
<dbReference type="InterPro" id="IPR036890">
    <property type="entry name" value="HATPase_C_sf"/>
</dbReference>
<dbReference type="InterPro" id="IPR010935">
    <property type="entry name" value="SMC_hinge"/>
</dbReference>
<dbReference type="InterPro" id="IPR036277">
    <property type="entry name" value="SMC_hinge_sf"/>
</dbReference>
<dbReference type="InterPro" id="IPR038892">
    <property type="entry name" value="SMCHD1"/>
</dbReference>
<dbReference type="InterPro" id="IPR055109">
    <property type="entry name" value="SMCHD1_S5"/>
</dbReference>
<dbReference type="PANTHER" id="PTHR22640">
    <property type="entry name" value="STRUCTURAL MAINTENANCE OF CHROMOSOMES FLEXIBLE HINGE DOMAIN-CONTAINING PROTEIN 1"/>
    <property type="match status" value="1"/>
</dbReference>
<dbReference type="PANTHER" id="PTHR22640:SF2">
    <property type="entry name" value="STRUCTURAL MAINTENANCE OF CHROMOSOMES FLEXIBLE HINGE DOMAIN-CONTAINING PROTEIN 1"/>
    <property type="match status" value="1"/>
</dbReference>
<dbReference type="Pfam" id="PF13589">
    <property type="entry name" value="HATPase_c_3"/>
    <property type="match status" value="1"/>
</dbReference>
<dbReference type="Pfam" id="PF06470">
    <property type="entry name" value="SMC_hinge"/>
    <property type="match status" value="1"/>
</dbReference>
<dbReference type="Pfam" id="PF22899">
    <property type="entry name" value="SMCHD1_S5"/>
    <property type="match status" value="1"/>
</dbReference>
<dbReference type="SMART" id="SM00968">
    <property type="entry name" value="SMC_hinge"/>
    <property type="match status" value="1"/>
</dbReference>
<dbReference type="SUPFAM" id="SSF55874">
    <property type="entry name" value="ATPase domain of HSP90 chaperone/DNA topoisomerase II/histidine kinase"/>
    <property type="match status" value="1"/>
</dbReference>
<dbReference type="SUPFAM" id="SSF75553">
    <property type="entry name" value="Smc hinge domain"/>
    <property type="match status" value="1"/>
</dbReference>
<protein>
    <recommendedName>
        <fullName evidence="1">Structural maintenance of chromosomes flexible hinge domain-containing protein 1</fullName>
        <shortName evidence="1">SMC hinge domain-containing protein 1</shortName>
        <ecNumber evidence="15">3.6.1.-</ecNumber>
    </recommendedName>
</protein>
<sequence>MAAADGGGPGGASVGTEEDGGGVGHRTVYLFDRREKESELGDRPLQVGERSDYAGFRACVCQTLGISPEEKFVITTTSRKEITCDNFDETVKDGVTLYLLQSVNQLLLTATKERIDFLPHYDTLVKSGMYEYYASEGQNPLPFALAELIDNSLSATSRNIGVRRIQIKLLFDETQGKPAVAVIDNGRGMTSKQLNNWAVYRLSKFTRQGDFESDHSGYVRPVPVPRSLNSDISYFGVGGKQAVFFVGQSARMISKPADSQDVHELVLSKEDFEKKEKNKEAIYSGYIRNRKPSDSVHITNDDERFLHHLIIEEKEKDSFTAVVITGVQPEHIQYLKNYFHLWTRQLAHIYHYYIHGPKGNEIRTSKEVEPFNNIDIEISMFEKGKVPKIVNLREIQDDMQTLYVNTAADSFEFKAHVEGDGVVEGIIRYHPFLYDRETYPDDPCFPSKLKDEDDEDDCFILEKAARGKRPIFECFWNGRLIPYTSVEDFDWCTPPKKRGLAPIECYNRISGALFTNDKFQVSTNKLTFMDLELKLKDKNTLFTRILNGQEQRMKIDREFALWLKDCHEKYDKQIKFTLFKGVITRPDLPSKKQGPWATYAAIEWDGKIYKAGQLVKTIKTLPLFYGSIVRFFLYGDHDGEVYATGGEVQIAMEPQALYDEVRTVPIAKLDRTVAEKAVKKYVEDEMARLPDRLSVTWPEGDELLPNEVRPAGTPIGALRIEILNKKGEAMQKLPGTSHGGSKKLLVELKVILHSSSGNKEIISHISQHGGKWPYWFKKMENIQKLGNYTLKLQVVLNESNADTYAGRPLPSKAIKFSVKEGKPEKFSFGLLDLPFRVGVPFNIPLEFQDEFGHTSQLVTDIQPVLEASGLSLHYEEITKGPNCVIRGVTAKGPVNSCQGKNYNLKVTLPGLKEDSQILKIRLLPGHPRRLKVKPDSEILVIENGTAFPFQVEVLDESDNITAQPKLIVHCKFSGAPNLPVYVVDCSSSGTSILTGSAIQVQNIKKDQTLKARIEIPSCKDVAPVEKTIKLLPSSHVARLQIFSVEGQKAIQIKHQDEVNWIAGDIMHNLIFQMYDEGEREINITSALAEKIKVNWTPEINKEHLLQGLLPDVQVPTSVKDMRYCQVSFQDDHVSLESAFTVRPLPDEPKHLKCEMKGGKTVQMGQELQGEVVIIITDQYGNQIQAFSPSSLSSLSIAGVGLDSSNLKTTFQENTQSISVRGIKFIPGPPGNKDLCFTWREFSDFIRVQLISGPPAKLLLIDWPELKESIPVINGRDLQNPIIVQLCDQWDNPAPVQHVKISLTKASNLKLMPSNQQHKTDEKGRANLGVFSVFAPRGEHTLQVKAIYNKSIIEGPIIKLMILPDPEKPVRLNVKYDKDASFLAGGLFTDFMISVISEDDSIIKNINPARISMKMWKLSTSGNRPPANAETFSCNKIKDNDKEDGCFYFRDKVIPNKVGTYCIQFGFMMDKTNILNSEQVIVEVLPNQPVKLVPKIKPPTPAVSNVRSVASRTLVRDLHLSITDDYDNHTGIDLVGTIIATIKGSNEEDTDTPLFIGKVRTLEFPFVNGSAEIMSLVLAESSPGRDSTEYFIVFEPRLPLLSRTLEPYILPFMFYNDVKKQQQMAALTKEKDQLSQSIVMYKSLFEASQQLLNEMKCQVEEARLKEAQLRNELKIHNIDIPTTQQVPHIEALLKRKLSEQEELKKKPRRSCTLPNYTKGSGDVLGKIAHLAQIEDDRAAMVISWHLASDMDCVVTLTTDAARRIYDETQGRQQVLPLDSIYKKTLPDWKRSLPHFRNGKLYFKPIGDPVFARDLLTFPDNVEHCETVFGMLLGDTIILDNLDAANHYRKEVVKITHCPTLLTRDGDRIRSNGKFGGLQNKAPPMDKLRGMVFGAPVPKQCLILGEQIDLLQQYRSAVCKLDSVNKDLNSQLEYLRTPDMRKKKQELDEHEKNLKLIEEKLGMTPIRKCNDSLRHSPKVETTDCPVPPKRMRREATRQNRIITKTDV</sequence>
<keyword id="KW-0002">3D-structure</keyword>
<keyword id="KW-0007">Acetylation</keyword>
<keyword id="KW-0025">Alternative splicing</keyword>
<keyword id="KW-0156">Chromatin regulator</keyword>
<keyword id="KW-0158">Chromosome</keyword>
<keyword id="KW-0903">Direct protein sequencing</keyword>
<keyword id="KW-0225">Disease variant</keyword>
<keyword id="KW-0227">DNA damage</keyword>
<keyword id="KW-0234">DNA repair</keyword>
<keyword id="KW-0238">DNA-binding</keyword>
<keyword id="KW-0378">Hydrolase</keyword>
<keyword id="KW-1016">Hypogonadotropic hypogonadism</keyword>
<keyword id="KW-1017">Isopeptide bond</keyword>
<keyword id="KW-0956">Kallmann syndrome</keyword>
<keyword id="KW-1013">Microphthalmia</keyword>
<keyword id="KW-0597">Phosphoprotein</keyword>
<keyword id="KW-1267">Proteomics identification</keyword>
<keyword id="KW-1185">Reference proteome</keyword>
<keyword id="KW-0832">Ubl conjugation</keyword>
<gene>
    <name evidence="21" type="primary">SMCHD1</name>
    <name evidence="19" type="synonym">KIAA0650</name>
</gene>
<evidence type="ECO:0000250" key="1">
    <source>
        <dbReference type="UniProtKB" id="Q6P5D8"/>
    </source>
</evidence>
<evidence type="ECO:0000255" key="2"/>
<evidence type="ECO:0000256" key="3">
    <source>
        <dbReference type="SAM" id="MobiDB-lite"/>
    </source>
</evidence>
<evidence type="ECO:0000269" key="4">
    <source>
    </source>
</evidence>
<evidence type="ECO:0000269" key="5">
    <source>
    </source>
</evidence>
<evidence type="ECO:0000269" key="6">
    <source>
    </source>
</evidence>
<evidence type="ECO:0000269" key="7">
    <source>
    </source>
</evidence>
<evidence type="ECO:0000269" key="8">
    <source>
    </source>
</evidence>
<evidence type="ECO:0000269" key="9">
    <source>
    </source>
</evidence>
<evidence type="ECO:0000269" key="10">
    <source>
    </source>
</evidence>
<evidence type="ECO:0000269" key="11">
    <source>
    </source>
</evidence>
<evidence type="ECO:0000269" key="12">
    <source>
    </source>
</evidence>
<evidence type="ECO:0000269" key="13">
    <source>
    </source>
</evidence>
<evidence type="ECO:0000269" key="14">
    <source>
    </source>
</evidence>
<evidence type="ECO:0000269" key="15">
    <source>
    </source>
</evidence>
<evidence type="ECO:0000269" key="16">
    <source ref="6"/>
</evidence>
<evidence type="ECO:0000303" key="17">
    <source>
    </source>
</evidence>
<evidence type="ECO:0000303" key="18">
    <source>
    </source>
</evidence>
<evidence type="ECO:0000303" key="19">
    <source>
    </source>
</evidence>
<evidence type="ECO:0000305" key="20"/>
<evidence type="ECO:0000312" key="21">
    <source>
        <dbReference type="HGNC" id="HGNC:29090"/>
    </source>
</evidence>
<evidence type="ECO:0007744" key="22">
    <source>
    </source>
</evidence>
<evidence type="ECO:0007744" key="23">
    <source>
    </source>
</evidence>
<evidence type="ECO:0007744" key="24">
    <source>
    </source>
</evidence>
<evidence type="ECO:0007744" key="25">
    <source>
    </source>
</evidence>
<evidence type="ECO:0007744" key="26">
    <source>
    </source>
</evidence>
<evidence type="ECO:0007829" key="27">
    <source>
        <dbReference type="PDB" id="6MW7"/>
    </source>
</evidence>
<reference key="1">
    <citation type="journal article" date="2004" name="Nat. Genet.">
        <title>Complete sequencing and characterization of 21,243 full-length human cDNAs.</title>
        <authorList>
            <person name="Ota T."/>
            <person name="Suzuki Y."/>
            <person name="Nishikawa T."/>
            <person name="Otsuki T."/>
            <person name="Sugiyama T."/>
            <person name="Irie R."/>
            <person name="Wakamatsu A."/>
            <person name="Hayashi K."/>
            <person name="Sato H."/>
            <person name="Nagai K."/>
            <person name="Kimura K."/>
            <person name="Makita H."/>
            <person name="Sekine M."/>
            <person name="Obayashi M."/>
            <person name="Nishi T."/>
            <person name="Shibahara T."/>
            <person name="Tanaka T."/>
            <person name="Ishii S."/>
            <person name="Yamamoto J."/>
            <person name="Saito K."/>
            <person name="Kawai Y."/>
            <person name="Isono Y."/>
            <person name="Nakamura Y."/>
            <person name="Nagahari K."/>
            <person name="Murakami K."/>
            <person name="Yasuda T."/>
            <person name="Iwayanagi T."/>
            <person name="Wagatsuma M."/>
            <person name="Shiratori A."/>
            <person name="Sudo H."/>
            <person name="Hosoiri T."/>
            <person name="Kaku Y."/>
            <person name="Kodaira H."/>
            <person name="Kondo H."/>
            <person name="Sugawara M."/>
            <person name="Takahashi M."/>
            <person name="Kanda K."/>
            <person name="Yokoi T."/>
            <person name="Furuya T."/>
            <person name="Kikkawa E."/>
            <person name="Omura Y."/>
            <person name="Abe K."/>
            <person name="Kamihara K."/>
            <person name="Katsuta N."/>
            <person name="Sato K."/>
            <person name="Tanikawa M."/>
            <person name="Yamazaki M."/>
            <person name="Ninomiya K."/>
            <person name="Ishibashi T."/>
            <person name="Yamashita H."/>
            <person name="Murakawa K."/>
            <person name="Fujimori K."/>
            <person name="Tanai H."/>
            <person name="Kimata M."/>
            <person name="Watanabe M."/>
            <person name="Hiraoka S."/>
            <person name="Chiba Y."/>
            <person name="Ishida S."/>
            <person name="Ono Y."/>
            <person name="Takiguchi S."/>
            <person name="Watanabe S."/>
            <person name="Yosida M."/>
            <person name="Hotuta T."/>
            <person name="Kusano J."/>
            <person name="Kanehori K."/>
            <person name="Takahashi-Fujii A."/>
            <person name="Hara H."/>
            <person name="Tanase T.-O."/>
            <person name="Nomura Y."/>
            <person name="Togiya S."/>
            <person name="Komai F."/>
            <person name="Hara R."/>
            <person name="Takeuchi K."/>
            <person name="Arita M."/>
            <person name="Imose N."/>
            <person name="Musashino K."/>
            <person name="Yuuki H."/>
            <person name="Oshima A."/>
            <person name="Sasaki N."/>
            <person name="Aotsuka S."/>
            <person name="Yoshikawa Y."/>
            <person name="Matsunawa H."/>
            <person name="Ichihara T."/>
            <person name="Shiohata N."/>
            <person name="Sano S."/>
            <person name="Moriya S."/>
            <person name="Momiyama H."/>
            <person name="Satoh N."/>
            <person name="Takami S."/>
            <person name="Terashima Y."/>
            <person name="Suzuki O."/>
            <person name="Nakagawa S."/>
            <person name="Senoh A."/>
            <person name="Mizoguchi H."/>
            <person name="Goto Y."/>
            <person name="Shimizu F."/>
            <person name="Wakebe H."/>
            <person name="Hishigaki H."/>
            <person name="Watanabe T."/>
            <person name="Sugiyama A."/>
            <person name="Takemoto M."/>
            <person name="Kawakami B."/>
            <person name="Yamazaki M."/>
            <person name="Watanabe K."/>
            <person name="Kumagai A."/>
            <person name="Itakura S."/>
            <person name="Fukuzumi Y."/>
            <person name="Fujimori Y."/>
            <person name="Komiyama M."/>
            <person name="Tashiro H."/>
            <person name="Tanigami A."/>
            <person name="Fujiwara T."/>
            <person name="Ono T."/>
            <person name="Yamada K."/>
            <person name="Fujii Y."/>
            <person name="Ozaki K."/>
            <person name="Hirao M."/>
            <person name="Ohmori Y."/>
            <person name="Kawabata A."/>
            <person name="Hikiji T."/>
            <person name="Kobatake N."/>
            <person name="Inagaki H."/>
            <person name="Ikema Y."/>
            <person name="Okamoto S."/>
            <person name="Okitani R."/>
            <person name="Kawakami T."/>
            <person name="Noguchi S."/>
            <person name="Itoh T."/>
            <person name="Shigeta K."/>
            <person name="Senba T."/>
            <person name="Matsumura K."/>
            <person name="Nakajima Y."/>
            <person name="Mizuno T."/>
            <person name="Morinaga M."/>
            <person name="Sasaki M."/>
            <person name="Togashi T."/>
            <person name="Oyama M."/>
            <person name="Hata H."/>
            <person name="Watanabe M."/>
            <person name="Komatsu T."/>
            <person name="Mizushima-Sugano J."/>
            <person name="Satoh T."/>
            <person name="Shirai Y."/>
            <person name="Takahashi Y."/>
            <person name="Nakagawa K."/>
            <person name="Okumura K."/>
            <person name="Nagase T."/>
            <person name="Nomura N."/>
            <person name="Kikuchi H."/>
            <person name="Masuho Y."/>
            <person name="Yamashita R."/>
            <person name="Nakai K."/>
            <person name="Yada T."/>
            <person name="Nakamura Y."/>
            <person name="Ohara O."/>
            <person name="Isogai T."/>
            <person name="Sugano S."/>
        </authorList>
    </citation>
    <scope>NUCLEOTIDE SEQUENCE [LARGE SCALE MRNA] (ISOFORM 3)</scope>
    <scope>NUCLEOTIDE SEQUENCE [LARGE SCALE MRNA] OF 1674-2005 (ISOFORM 1)</scope>
    <source>
        <tissue>Trachea</tissue>
    </source>
</reference>
<reference key="2">
    <citation type="journal article" date="2005" name="Nature">
        <title>DNA sequence and analysis of human chromosome 18.</title>
        <authorList>
            <person name="Nusbaum C."/>
            <person name="Zody M.C."/>
            <person name="Borowsky M.L."/>
            <person name="Kamal M."/>
            <person name="Kodira C.D."/>
            <person name="Taylor T.D."/>
            <person name="Whittaker C.A."/>
            <person name="Chang J.L."/>
            <person name="Cuomo C.A."/>
            <person name="Dewar K."/>
            <person name="FitzGerald M.G."/>
            <person name="Yang X."/>
            <person name="Abouelleil A."/>
            <person name="Allen N.R."/>
            <person name="Anderson S."/>
            <person name="Bloom T."/>
            <person name="Bugalter B."/>
            <person name="Butler J."/>
            <person name="Cook A."/>
            <person name="DeCaprio D."/>
            <person name="Engels R."/>
            <person name="Garber M."/>
            <person name="Gnirke A."/>
            <person name="Hafez N."/>
            <person name="Hall J.L."/>
            <person name="Norman C.H."/>
            <person name="Itoh T."/>
            <person name="Jaffe D.B."/>
            <person name="Kuroki Y."/>
            <person name="Lehoczky J."/>
            <person name="Lui A."/>
            <person name="Macdonald P."/>
            <person name="Mauceli E."/>
            <person name="Mikkelsen T.S."/>
            <person name="Naylor J.W."/>
            <person name="Nicol R."/>
            <person name="Nguyen C."/>
            <person name="Noguchi H."/>
            <person name="O'Leary S.B."/>
            <person name="Piqani B."/>
            <person name="Smith C.L."/>
            <person name="Talamas J.A."/>
            <person name="Topham K."/>
            <person name="Totoki Y."/>
            <person name="Toyoda A."/>
            <person name="Wain H.M."/>
            <person name="Young S.K."/>
            <person name="Zeng Q."/>
            <person name="Zimmer A.R."/>
            <person name="Fujiyama A."/>
            <person name="Hattori M."/>
            <person name="Birren B.W."/>
            <person name="Sakaki Y."/>
            <person name="Lander E.S."/>
        </authorList>
    </citation>
    <scope>NUCLEOTIDE SEQUENCE [LARGE SCALE GENOMIC DNA]</scope>
</reference>
<reference key="3">
    <citation type="journal article" date="2007" name="BMC Genomics">
        <title>The full-ORF clone resource of the German cDNA consortium.</title>
        <authorList>
            <person name="Bechtel S."/>
            <person name="Rosenfelder H."/>
            <person name="Duda A."/>
            <person name="Schmidt C.P."/>
            <person name="Ernst U."/>
            <person name="Wellenreuther R."/>
            <person name="Mehrle A."/>
            <person name="Schuster C."/>
            <person name="Bahr A."/>
            <person name="Bloecker H."/>
            <person name="Heubner D."/>
            <person name="Hoerlein A."/>
            <person name="Michel G."/>
            <person name="Wedler H."/>
            <person name="Koehrer K."/>
            <person name="Ottenwaelder B."/>
            <person name="Poustka A."/>
            <person name="Wiemann S."/>
            <person name="Schupp I."/>
        </authorList>
    </citation>
    <scope>NUCLEOTIDE SEQUENCE [LARGE SCALE MRNA] OF 530-2005 (ISOFORM 2)</scope>
    <scope>NUCLEOTIDE SEQUENCE [LARGE SCALE MRNA] OF 1278-2005 (ISOFORM 1)</scope>
    <source>
        <tissue>Testis</tissue>
    </source>
</reference>
<reference key="4">
    <citation type="journal article" date="1998" name="DNA Res.">
        <title>Prediction of the coding sequences of unidentified human genes. X. The complete sequences of 100 new cDNA clones from brain which can code for large proteins in vitro.</title>
        <authorList>
            <person name="Ishikawa K."/>
            <person name="Nagase T."/>
            <person name="Suyama M."/>
            <person name="Miyajima N."/>
            <person name="Tanaka A."/>
            <person name="Kotani H."/>
            <person name="Nomura N."/>
            <person name="Ohara O."/>
        </authorList>
    </citation>
    <scope>NUCLEOTIDE SEQUENCE [LARGE SCALE MRNA] OF 1158-2005 (ISOFORM 1)</scope>
    <source>
        <tissue>Brain</tissue>
    </source>
</reference>
<reference key="5">
    <citation type="journal article" date="2004" name="Genome Res.">
        <title>The status, quality, and expansion of the NIH full-length cDNA project: the Mammalian Gene Collection (MGC).</title>
        <authorList>
            <consortium name="The MGC Project Team"/>
        </authorList>
    </citation>
    <scope>NUCLEOTIDE SEQUENCE [LARGE SCALE MRNA] OF 1699-2005 (ISOFORM 1)</scope>
    <source>
        <tissue>Eye</tissue>
    </source>
</reference>
<reference key="6">
    <citation type="submission" date="2008-12" db="UniProtKB">
        <authorList>
            <person name="Bienvenut W.V."/>
            <person name="Lilla S."/>
            <person name="von Kriegsheim A."/>
            <person name="Lempens A."/>
            <person name="Kolch W."/>
        </authorList>
    </citation>
    <scope>PROTEIN SEQUENCE OF 2-26; 280-288; 663-671; 826-836; 1208-1220; 1267-1275 AND 1495-1506</scope>
    <scope>CLEAVAGE OF INITIATOR METHIONINE</scope>
    <scope>ACETYLATION AT ALA-2</scope>
    <scope>IDENTIFICATION BY MASS SPECTROMETRY</scope>
    <source>
        <tissue>Ovarian carcinoma</tissue>
    </source>
</reference>
<reference key="7">
    <citation type="journal article" date="2009" name="Anal. Chem.">
        <title>Lys-N and trypsin cover complementary parts of the phosphoproteome in a refined SCX-based approach.</title>
        <authorList>
            <person name="Gauci S."/>
            <person name="Helbig A.O."/>
            <person name="Slijper M."/>
            <person name="Krijgsveld J."/>
            <person name="Heck A.J."/>
            <person name="Mohammed S."/>
        </authorList>
    </citation>
    <scope>ACETYLATION [LARGE SCALE ANALYSIS] AT ALA-2</scope>
    <scope>CLEAVAGE OF INITIATOR METHIONINE [LARGE SCALE ANALYSIS]</scope>
    <scope>IDENTIFICATION BY MASS SPECTROMETRY [LARGE SCALE ANALYSIS]</scope>
</reference>
<reference key="8">
    <citation type="journal article" date="2009" name="Science">
        <title>Lysine acetylation targets protein complexes and co-regulates major cellular functions.</title>
        <authorList>
            <person name="Choudhary C."/>
            <person name="Kumar C."/>
            <person name="Gnad F."/>
            <person name="Nielsen M.L."/>
            <person name="Rehman M."/>
            <person name="Walther T.C."/>
            <person name="Olsen J.V."/>
            <person name="Mann M."/>
        </authorList>
    </citation>
    <scope>ACETYLATION [LARGE SCALE ANALYSIS] AT LYS-1349</scope>
    <scope>IDENTIFICATION BY MASS SPECTROMETRY [LARGE SCALE ANALYSIS]</scope>
</reference>
<reference key="9">
    <citation type="journal article" date="2011" name="BMC Syst. Biol.">
        <title>Initial characterization of the human central proteome.</title>
        <authorList>
            <person name="Burkard T.R."/>
            <person name="Planyavsky M."/>
            <person name="Kaupe I."/>
            <person name="Breitwieser F.P."/>
            <person name="Buerckstuemmer T."/>
            <person name="Bennett K.L."/>
            <person name="Superti-Furga G."/>
            <person name="Colinge J."/>
        </authorList>
    </citation>
    <scope>IDENTIFICATION BY MASS SPECTROMETRY [LARGE SCALE ANALYSIS]</scope>
</reference>
<reference key="10">
    <citation type="journal article" date="2013" name="J. Proteome Res.">
        <title>Toward a comprehensive characterization of a human cancer cell phosphoproteome.</title>
        <authorList>
            <person name="Zhou H."/>
            <person name="Di Palma S."/>
            <person name="Preisinger C."/>
            <person name="Peng M."/>
            <person name="Polat A.N."/>
            <person name="Heck A.J."/>
            <person name="Mohammed S."/>
        </authorList>
    </citation>
    <scope>PHOSPHORYLATION [LARGE SCALE ANALYSIS] AT THR-1499 AND SER-1974</scope>
    <scope>IDENTIFICATION BY MASS SPECTROMETRY [LARGE SCALE ANALYSIS]</scope>
    <source>
        <tissue>Erythroleukemia</tissue>
    </source>
</reference>
<reference key="11">
    <citation type="journal article" date="2013" name="Nat. Struct. Mol. Biol.">
        <title>Human inactive X chromosome is compacted through a PRC2-independent SMCHD1-HBiX1 pathway.</title>
        <authorList>
            <person name="Nozawa R.S."/>
            <person name="Nagao K."/>
            <person name="Igami K.T."/>
            <person name="Shibata S."/>
            <person name="Shirai N."/>
            <person name="Nozaki N."/>
            <person name="Sado T."/>
            <person name="Kimura H."/>
            <person name="Obuse C."/>
        </authorList>
    </citation>
    <scope>FUNCTION</scope>
    <scope>INTERACTION WITH LRIF1</scope>
</reference>
<reference key="12">
    <citation type="journal article" date="2014" name="J. Biol. Chem.">
        <title>Structural maintenance of chromosomes flexible hinge domain containing 1 (SMCHD1) promotes non-homologous end joining and inhibits homologous recombination repair upon DNA damage.</title>
        <authorList>
            <person name="Tang M."/>
            <person name="Li Y."/>
            <person name="Zhang X."/>
            <person name="Deng T."/>
            <person name="Zhou Z."/>
            <person name="Ma W."/>
            <person name="Songyang Z."/>
        </authorList>
    </citation>
    <scope>FUNCTION</scope>
    <scope>SUBCELLULAR LOCATION</scope>
</reference>
<reference key="13">
    <citation type="journal article" date="2014" name="J. Cell Sci.">
        <title>SMCHD1 accumulates at DNA damage sites and facilitates the repair of DNA double-strand breaks.</title>
        <authorList>
            <person name="Coker H."/>
            <person name="Brockdorff N."/>
        </authorList>
    </citation>
    <scope>FUNCTION</scope>
    <scope>SUBCELLULAR LOCATION</scope>
</reference>
<reference key="14">
    <citation type="journal article" date="2014" name="Nat. Struct. Mol. Biol.">
        <title>Uncovering global SUMOylation signaling networks in a site-specific manner.</title>
        <authorList>
            <person name="Hendriks I.A."/>
            <person name="D'Souza R.C."/>
            <person name="Yang B."/>
            <person name="Verlaan-de Vries M."/>
            <person name="Mann M."/>
            <person name="Vertegaal A.C."/>
        </authorList>
    </citation>
    <scope>SUMOYLATION [LARGE SCALE ANALYSIS] AT LYS-1374</scope>
    <scope>IDENTIFICATION BY MASS SPECTROMETRY [LARGE SCALE ANALYSIS]</scope>
</reference>
<reference key="15">
    <citation type="journal article" date="2017" name="Nat. Struct. Mol. Biol.">
        <title>Site-specific mapping of the human SUMO proteome reveals co-modification with phosphorylation.</title>
        <authorList>
            <person name="Hendriks I.A."/>
            <person name="Lyon D."/>
            <person name="Young C."/>
            <person name="Jensen L.J."/>
            <person name="Vertegaal A.C."/>
            <person name="Nielsen M.L."/>
        </authorList>
    </citation>
    <scope>SUMOYLATION [LARGE SCALE ANALYSIS] AT LYS-1374 AND LYS-1496</scope>
    <scope>IDENTIFICATION BY MASS SPECTROMETRY [LARGE SCALE ANALYSIS]</scope>
</reference>
<reference key="16">
    <citation type="journal article" date="2012" name="Nat. Genet.">
        <title>Digenic inheritance of an SMCHD1 mutation and an FSHD-permissive D4Z4 allele causes facioscapulohumeral muscular dystrophy type 2.</title>
        <authorList>
            <person name="Lemmers R.J."/>
            <person name="Tawil R."/>
            <person name="Petek L.M."/>
            <person name="Balog J."/>
            <person name="Block G.J."/>
            <person name="Santen G.W."/>
            <person name="Amell A.M."/>
            <person name="van der Vliet P.J."/>
            <person name="Almomani R."/>
            <person name="Straasheijm K.R."/>
            <person name="Krom Y.D."/>
            <person name="Klooster R."/>
            <person name="Sun Y."/>
            <person name="den Dunnen J.T."/>
            <person name="Helmer Q."/>
            <person name="Donlin-Smith C.M."/>
            <person name="Padberg G.W."/>
            <person name="van Engelen B.G."/>
            <person name="de Greef J.C."/>
            <person name="Aartsma-Rus A.M."/>
            <person name="Frants R.R."/>
            <person name="de Visser M."/>
            <person name="Desnuelle C."/>
            <person name="Sacconi S."/>
            <person name="Filippova G.N."/>
            <person name="Bakker B."/>
            <person name="Bamshad M.J."/>
            <person name="Tapscott S.J."/>
            <person name="Miller D.G."/>
            <person name="van der Maarel S.M."/>
        </authorList>
    </citation>
    <scope>VARIANTS FSHD2 CYS-353; PRO-479; ARG-492; SER-690; ASN-868 AND SER-1554</scope>
    <scope>FUNCTION</scope>
    <scope>INVOLVEMENT IN FSHD2</scope>
</reference>
<reference key="17">
    <citation type="journal article" date="2013" name="Am. J. Hum. Genet.">
        <title>The FSHD2 gene SMCHD1 is a modifier of disease severity in families affected by FSHD1.</title>
        <authorList>
            <person name="Sacconi S."/>
            <person name="Lemmers R.J."/>
            <person name="Balog J."/>
            <person name="van der Vliet P.J."/>
            <person name="Lahaut P."/>
            <person name="van Nieuwenhuizen M.P."/>
            <person name="Straasheijm K.R."/>
            <person name="Debipersad R.D."/>
            <person name="Vos-Versteeg M."/>
            <person name="Salviati L."/>
            <person name="Casarin A."/>
            <person name="Pegoraro E."/>
            <person name="Tawil R."/>
            <person name="Bakker E."/>
            <person name="Tapscott S.J."/>
            <person name="Desnuelle C."/>
            <person name="van der Maarel S.M."/>
        </authorList>
    </citation>
    <scope>VARIANT FSHD2 MET-527</scope>
</reference>
<reference key="18">
    <citation type="journal article" date="2013" name="Neuromuscul. Disord.">
        <title>Exome sequencing identifies a novel SMCHD1 mutation in facioscapulohumeral muscular dystrophy 2.</title>
        <authorList>
            <person name="Mitsuhashi S."/>
            <person name="Boyden S.E."/>
            <person name="Estrella E.A."/>
            <person name="Jones T.I."/>
            <person name="Rahimov F."/>
            <person name="Yu T.W."/>
            <person name="Darras B.T."/>
            <person name="Amato A.A."/>
            <person name="Folkerth R.D."/>
            <person name="Jones P.L."/>
            <person name="Kunkel L.M."/>
            <person name="Kang P.B."/>
        </authorList>
    </citation>
    <scope>VARIANT FSHD2 LYS-275 DEL</scope>
</reference>
<reference key="19">
    <citation type="journal article" date="2015" name="Eur. J. Hum. Genet.">
        <title>Diagnostic approach for FSHD revisited: SMCHD1 mutations cause FSHD2 and act as modifiers of disease severity in FSHD1.</title>
        <authorList>
            <person name="Larsen M."/>
            <person name="Rost S."/>
            <person name="El Hajj N."/>
            <person name="Ferbert A."/>
            <person name="Deschauer M."/>
            <person name="Walter M.C."/>
            <person name="Schoser B."/>
            <person name="Tacik P."/>
            <person name="Kress W."/>
            <person name="Mueller C.R."/>
        </authorList>
    </citation>
    <scope>VARIANTS FSHD2 THR-110; GLU-478; ASP-615; LYS-1449; PRO-1463; LEU-1485 AND 1663-LEU--VAL-2005 DEL</scope>
</reference>
<reference key="20">
    <citation type="journal article" date="2015" name="Hum. Mol. Genet.">
        <title>Inter-individual differences in CpG methylation at D4Z4 correlate with clinical variability in FSHD1 and FSHD2.</title>
        <authorList>
            <person name="Lemmers R.J."/>
            <person name="Goeman J.J."/>
            <person name="van der Vliet P.J."/>
            <person name="van Nieuwenhuizen M.P."/>
            <person name="Balog J."/>
            <person name="Vos-Versteeg M."/>
            <person name="Camano P."/>
            <person name="Ramos Arroyo M.A."/>
            <person name="Jerico I."/>
            <person name="Rogers M.T."/>
            <person name="Miller D.G."/>
            <person name="Upadhyaya M."/>
            <person name="Verschuuren J.J."/>
            <person name="Lopez de Munain Arregui A."/>
            <person name="van Engelen B.G."/>
            <person name="Padberg G.W."/>
            <person name="Sacconi S."/>
            <person name="Tawil R."/>
            <person name="Tapscott S.J."/>
            <person name="Bakker B."/>
            <person name="van der Maarel S.M."/>
        </authorList>
    </citation>
    <scope>VARIANTS FSHD2 GLU-137; 138-GLN--VAL-2005 DEL; PHE-194; 195-ASN--VAL-2005 DEL; ASP-263; 344-ARG--VAL-2005 DEL; CYS-353; ARG-425; 434-TYR--VAL-2005 DEL; PRO-479; SER-690; SER-716; 731-GLN--VAL-2005 DEL; PRO-748; 780-GLU--VAL-2005 DEL; ASN-849; ASN-868; ILE-1468; SER-1554; 1176-THR-ASP-1177 DELINS MET-HIS; 1795-ARG--VAL-2005 DEL AND 1868-ARG--VAL-2005 DEL</scope>
</reference>
<reference key="21">
    <citation type="journal article" date="2016" name="Biochem. J.">
        <title>The epigenetic regulator Smchd1 contains a functional GHKL-type ATPase domain.</title>
        <authorList>
            <person name="Chen K."/>
            <person name="Dobson R.C."/>
            <person name="Lucet I.S."/>
            <person name="Young S.N."/>
            <person name="Pearce F.G."/>
            <person name="Blewitt M.E."/>
            <person name="Murphy J.M."/>
        </authorList>
    </citation>
    <scope>VARIANT FSHD2 ARG-425</scope>
</reference>
<reference key="22">
    <citation type="journal article" date="2017" name="Nat. Genet.">
        <title>SMCHD1 mutations associated with a rare muscular dystrophy can also cause isolated arhinia and Bosma arhinia microphthalmia syndrome.</title>
        <authorList>
            <person name="Shaw N.D."/>
            <person name="Brand H."/>
            <person name="Kupchinsky Z.A."/>
            <person name="Bengani H."/>
            <person name="Plummer L."/>
            <person name="Jones T.I."/>
            <person name="Erdin S."/>
            <person name="Williamson K.A."/>
            <person name="Rainger J."/>
            <person name="Stortchevoi A."/>
            <person name="Samocha K."/>
            <person name="Currall B.B."/>
            <person name="Dunican D.S."/>
            <person name="Collins R.L."/>
            <person name="Willer J.R."/>
            <person name="Lek A."/>
            <person name="Lek M."/>
            <person name="Nassan M."/>
            <person name="Pereira S."/>
            <person name="Kammin T."/>
            <person name="Lucente D."/>
            <person name="Silva A."/>
            <person name="Seabra C.M."/>
            <person name="Chiang C."/>
            <person name="An Y."/>
            <person name="Ansari M."/>
            <person name="Rainger J.K."/>
            <person name="Joss S."/>
            <person name="Smith J.C."/>
            <person name="Lippincott M.F."/>
            <person name="Singh S.S."/>
            <person name="Patel N."/>
            <person name="Jing J.W."/>
            <person name="Law J.R."/>
            <person name="Ferraro N."/>
            <person name="Verloes A."/>
            <person name="Rauch A."/>
            <person name="Steindl K."/>
            <person name="Zweier M."/>
            <person name="Scheer I."/>
            <person name="Sato D."/>
            <person name="Okamoto N."/>
            <person name="Jacobsen C."/>
            <person name="Tryggestad J."/>
            <person name="Chernausek S."/>
            <person name="Schimmenti L.A."/>
            <person name="Brasseur B."/>
            <person name="Cesaretti C."/>
            <person name="Garcia-Ortiz J.E."/>
            <person name="Buitrago T.P."/>
            <person name="Silva O.P."/>
            <person name="Hoffman J.D."/>
            <person name="Muehlbauer W."/>
            <person name="Ruprecht K.W."/>
            <person name="Loeys B.L."/>
            <person name="Shino M."/>
            <person name="Kaindl A.M."/>
            <person name="Cho C.H."/>
            <person name="Morton C.C."/>
            <person name="Meehan R.R."/>
            <person name="van Heyningen V."/>
            <person name="Liao E.C."/>
            <person name="Balasubramanian R."/>
            <person name="Hall J.E."/>
            <person name="Seminara S.B."/>
            <person name="Macarthur D."/>
            <person name="Moore S.A."/>
            <person name="Yoshiura K.I."/>
            <person name="Gusella J.F."/>
            <person name="Marsh J.A."/>
            <person name="Graham J.M. Jr."/>
            <person name="Lin A.E."/>
            <person name="Katsanis N."/>
            <person name="Jones P.L."/>
            <person name="Crowley W.F. Jr."/>
            <person name="Davis E.E."/>
            <person name="FitzPatrick D.R."/>
            <person name="Talkowski M.E."/>
        </authorList>
    </citation>
    <scope>INVOLVEMENT IN BAMS</scope>
    <scope>VARIANTS BAMS PRO-107; LYS-129; ASN-135; CYS-135; ILE-135; ASP-136; GLU-137; HIS-139; PHE-141; VAL-171; GLY-242; ARG-345; ARG-348; LEU-400; VAL-420; GLN-473; LYS-523; SER-524 AND GLN-552</scope>
    <scope>CHARACTERIZATION OF VARIANTS BAMS PRO-107; LYS-129; ASN-135; CYS-135; ILE-135; ASP-136; GLU-137; HIS-139; PHE-141; VAL-171; GLY-242; ARG-345; ARG-348; LEU-400; VAL-420; GLN-473; LYS-523; SER-524 AND GLN-552</scope>
</reference>
<reference key="23">
    <citation type="journal article" date="2017" name="Nat. Genet.">
        <title>De novo mutations in SMCHD1 cause Bosma arhinia microphthalmia syndrome and abrogate nasal development.</title>
        <authorList>
            <person name="Gordon C.T."/>
            <person name="Xue S."/>
            <person name="Yigit G."/>
            <person name="Filali H."/>
            <person name="Chen K."/>
            <person name="Rosin N."/>
            <person name="Yoshiura K.I."/>
            <person name="Oufadem M."/>
            <person name="Beck T.J."/>
            <person name="McGowan R."/>
            <person name="Magee A.C."/>
            <person name="Altmueller J."/>
            <person name="Dion C."/>
            <person name="Thiele H."/>
            <person name="Gurzau A.D."/>
            <person name="Nuernberg P."/>
            <person name="Meschede D."/>
            <person name="Muehlbauer W."/>
            <person name="Okamoto N."/>
            <person name="Varghese V."/>
            <person name="Irving R."/>
            <person name="Sigaudy S."/>
            <person name="Williams D."/>
            <person name="Ahmed S.F."/>
            <person name="Bonnard C."/>
            <person name="Kong M.K."/>
            <person name="Ratbi I."/>
            <person name="Fejjal N."/>
            <person name="Fikri M."/>
            <person name="Elalaoui S.C."/>
            <person name="Reigstad H."/>
            <person name="Bole-Feysot C."/>
            <person name="Nitschke P."/>
            <person name="Ragge N."/>
            <person name="Levy N."/>
            <person name="Tuncbilek G."/>
            <person name="Teo A.S."/>
            <person name="Cunningham M.L."/>
            <person name="Sefiani A."/>
            <person name="Kayserili H."/>
            <person name="Murphy J.M."/>
            <person name="Chatdokmaiprai C."/>
            <person name="Hillmer A.M."/>
            <person name="Wattanasirichaigoon D."/>
            <person name="Lyonnet S."/>
            <person name="Magdinier F."/>
            <person name="Javed A."/>
            <person name="Blewitt M.E."/>
            <person name="Amiel J."/>
            <person name="Wollnik B."/>
            <person name="Reversade B."/>
        </authorList>
    </citation>
    <scope>VARIANTS BAMS SER-134; ASN-135; CYS-135; GLY-136; SER-342; ARG-348; VAL-420; GLU-518 AND GLN-552</scope>
    <scope>CHARACTERIZATION OF VARIANTS BAMS SER-134; CYS-135; GLY-136 AND VAL-420</scope>
    <scope>CHARACTERIZATION OF VARIANTS FSHD2 CYS-353 AND MET-527</scope>
</reference>
<reference key="24">
    <citation type="journal article" date="2018" name="J. Biol. Chem.">
        <title>FSHD2- and BAMS-associated mutations confer opposing effects on SMCHD1 function.</title>
        <authorList>
            <person name="Gurzau A.D."/>
            <person name="Chen K."/>
            <person name="Xue S."/>
            <person name="Dai W."/>
            <person name="Lucet I.S."/>
            <person name="Ly T.T.N."/>
            <person name="Reversade B."/>
            <person name="Blewitt M.E."/>
            <person name="Murphy J.M."/>
        </authorList>
    </citation>
    <scope>VARIANTS FSHD2 PHE-194; ASP-263; CYS-283; CYS-353; GLU-478; MET-527 AND SER-690</scope>
    <scope>VARIANTS BAMS ASN-135; GLU-137; SER-342; ARG-348; VAL-420; GLN-473; GLU-518; LYS-523 AND GLN-552</scope>
    <scope>CHARACTERIZATION OF VARIANTS FSHD2 PHE-194; ASP-263; CYS-283; CYS-353; GLU-478; MET-527 AND SER-690</scope>
    <scope>CHARACTERIZATION OF VARIANTS BAMS ASN-135; GLU-137; SER-342; ARG-348; VAL-420; GLN-473; GLU-518; LYS-523 AND GLN-552</scope>
    <scope>FUNCTION</scope>
    <scope>CATALYTIC ACTIVITY</scope>
</reference>
<proteinExistence type="evidence at protein level"/>
<organism>
    <name type="scientific">Homo sapiens</name>
    <name type="common">Human</name>
    <dbReference type="NCBI Taxonomy" id="9606"/>
    <lineage>
        <taxon>Eukaryota</taxon>
        <taxon>Metazoa</taxon>
        <taxon>Chordata</taxon>
        <taxon>Craniata</taxon>
        <taxon>Vertebrata</taxon>
        <taxon>Euteleostomi</taxon>
        <taxon>Mammalia</taxon>
        <taxon>Eutheria</taxon>
        <taxon>Euarchontoglires</taxon>
        <taxon>Primates</taxon>
        <taxon>Haplorrhini</taxon>
        <taxon>Catarrhini</taxon>
        <taxon>Hominidae</taxon>
        <taxon>Homo</taxon>
    </lineage>
</organism>
<accession>A6NHR9</accession>
<accession>O75141</accession>
<accession>Q6AHX6</accession>
<accession>Q6ZTQ8</accession>
<accession>Q9H6Q2</accession>
<accession>Q9UG39</accession>